<comment type="function">
    <text evidence="8 19">Deubiquitinase that mediates 'Lys-63'-linked deubiquitination of tight junction proteins, such as MARVELD2 and LSR, and which is involved in the survival of auditory hair cells and hearing (PubMed:32124521, PubMed:39587316). Specifically cleaves 'Lys-63'-linked polyubiquitin chains composed of at least 3 ubiquitin molecules, while it is not able to deubiquitinate substrates with shorter ubiquitin chains: recognizes ubiquitin chain in position S2 and catalyzes en bloc cleavage of polyubiquitin chains from substrate proteins (PubMed:39587316). Probably acts by modulating the barrier properties and mechanical stability of tight junctions via deubiquitination of MARVELD2 and LSR (PubMed:32124521, PubMed:39587316).</text>
</comment>
<comment type="catalytic activity">
    <reaction evidence="19">
        <text>Thiol-dependent hydrolysis of ester, thioester, amide, peptide and isopeptide bonds formed by the C-terminal Gly of ubiquitin (a 76-residue protein attached to proteins as an intracellular targeting signal).</text>
        <dbReference type="EC" id="3.4.19.12"/>
    </reaction>
</comment>
<comment type="subunit">
    <text evidence="1">Interacts (via the C-terminal region) with the heterodimer TJP1:TJP2.</text>
</comment>
<comment type="interaction">
    <interactant intactId="EBI-742050">
        <id>Q70EK8</id>
    </interactant>
    <interactant intactId="EBI-886">
        <id>P46108</id>
        <label>CRK</label>
    </interactant>
    <organismsDiffer>false</organismsDiffer>
    <experiments>11</experiments>
</comment>
<comment type="interaction">
    <interactant intactId="EBI-742050">
        <id>Q70EK8</id>
    </interactant>
    <interactant intactId="EBI-910">
        <id>P46109</id>
        <label>CRKL</label>
    </interactant>
    <organismsDiffer>false</organismsDiffer>
    <experiments>5</experiments>
</comment>
<comment type="interaction">
    <interactant intactId="EBI-742050">
        <id>Q70EK8</id>
    </interactant>
    <interactant intactId="EBI-1047489">
        <id>Q5PRF9</id>
        <label>SAMD4B</label>
    </interactant>
    <organismsDiffer>false</organismsDiffer>
    <experiments>3</experiments>
</comment>
<comment type="subcellular location">
    <subcellularLocation>
        <location evidence="8">Cell junction</location>
        <location evidence="8">Tight junction</location>
    </subcellularLocation>
</comment>
<comment type="tissue specificity">
    <text evidence="6">Expressed predominantly in skeletal muscle and heart.</text>
</comment>
<comment type="disease" evidence="7 8 9 10 11 12 13 14 15 16 17 18 19">
    <disease id="DI-06293">
        <name>Cholestasis, progressive familial intrahepatic, 7, with or without hearing loss</name>
        <acronym>PFIC7</acronym>
        <description>An autosomal recessive form of progressive cholestasis, a disorder characterized by early onset of cholestasis that progresses to hepatic fibrosis, cirrhosis, and end-stage liver disease. Some PFIC7 patients develop hearing loss in childhood.</description>
        <dbReference type="MIM" id="619658"/>
    </disease>
    <text>The disease is caused by variants affecting the gene represented in this entry.</text>
</comment>
<comment type="similarity">
    <text evidence="22">Belongs to the peptidase C19 family.</text>
</comment>
<comment type="caution">
    <text evidence="6 19">Was initially reported to have no protein deubiquitinase activity due to the absence of a conserved His residue normally found 9 residues before the catalytic His (PubMed:14715245). However, it was later shown to specifically cleave 'Lys-63'-linked polyubiquitin chains composed of at least 3 ubiquitins (PubMed:39587316).</text>
</comment>
<comment type="sequence caution" evidence="22">
    <conflict type="erroneous initiation">
        <sequence resource="EMBL-CDS" id="AAH17382"/>
    </conflict>
    <text>Truncated N-terminus.</text>
</comment>
<protein>
    <recommendedName>
        <fullName evidence="22">Ubiquitin carboxyl-terminal hydrolase 53</fullName>
        <ecNumber evidence="19">3.4.19.12</ecNumber>
    </recommendedName>
    <alternativeName>
        <fullName evidence="22">Ubiquitin-specific peptidase 53</fullName>
    </alternativeName>
</protein>
<reference evidence="22 25" key="1">
    <citation type="journal article" date="2004" name="Biochem. Biophys. Res. Commun.">
        <title>Cloning and enzymatic analysis of 22 novel human ubiquitin-specific proteases.</title>
        <authorList>
            <person name="Quesada V."/>
            <person name="Diaz-Perales A."/>
            <person name="Gutierrez-Fernandez A."/>
            <person name="Garabaya C."/>
            <person name="Cal S."/>
            <person name="Lopez-Otin C."/>
        </authorList>
    </citation>
    <scope>NUCLEOTIDE SEQUENCE [MRNA]</scope>
    <scope>TISSUE SPECIFICITY</scope>
</reference>
<reference key="2">
    <citation type="journal article" date="2007" name="BMC Genomics">
        <title>The full-ORF clone resource of the German cDNA consortium.</title>
        <authorList>
            <person name="Bechtel S."/>
            <person name="Rosenfelder H."/>
            <person name="Duda A."/>
            <person name="Schmidt C.P."/>
            <person name="Ernst U."/>
            <person name="Wellenreuther R."/>
            <person name="Mehrle A."/>
            <person name="Schuster C."/>
            <person name="Bahr A."/>
            <person name="Bloecker H."/>
            <person name="Heubner D."/>
            <person name="Hoerlein A."/>
            <person name="Michel G."/>
            <person name="Wedler H."/>
            <person name="Koehrer K."/>
            <person name="Ottenwaelder B."/>
            <person name="Poustka A."/>
            <person name="Wiemann S."/>
            <person name="Schupp I."/>
        </authorList>
    </citation>
    <scope>NUCLEOTIDE SEQUENCE [LARGE SCALE MRNA]</scope>
    <source>
        <tissue>Fetal kidney</tissue>
    </source>
</reference>
<reference evidence="22 24" key="3">
    <citation type="journal article" date="2000" name="DNA Res.">
        <title>Prediction of the coding sequences of unidentified human genes. XVI. The complete sequences of 150 new cDNA clones from brain which code for large proteins in vitro.</title>
        <authorList>
            <person name="Nagase T."/>
            <person name="Kikuno R."/>
            <person name="Ishikawa K."/>
            <person name="Hirosawa M."/>
            <person name="Ohara O."/>
        </authorList>
    </citation>
    <scope>NUCLEOTIDE SEQUENCE [LARGE SCALE MRNA] OF 163-1073</scope>
    <scope>VARIANT ARG-962</scope>
    <source>
        <tissue evidence="24">Brain</tissue>
    </source>
</reference>
<reference evidence="22 23" key="4">
    <citation type="journal article" date="2004" name="Genome Res.">
        <title>The status, quality, and expansion of the NIH full-length cDNA project: the Mammalian Gene Collection (MGC).</title>
        <authorList>
            <consortium name="The MGC Project Team"/>
        </authorList>
    </citation>
    <scope>NUCLEOTIDE SEQUENCE [LARGE SCALE MRNA] OF 869-1073</scope>
    <source>
        <tissue evidence="23">Brain</tissue>
    </source>
</reference>
<reference key="5">
    <citation type="journal article" date="2019" name="Genet. Med.">
        <title>Identification of novel loci for pediatric cholestatic liver disease defined by KIF12, PPM1F, USP53, LSR, and WDR83OS pathogenic variants.</title>
        <authorList>
            <person name="Maddirevula S."/>
            <person name="Alhebbi H."/>
            <person name="Alqahtani A."/>
            <person name="Algoufi T."/>
            <person name="Alsaif H.S."/>
            <person name="Ibrahim N."/>
            <person name="Abdulwahab F."/>
            <person name="Barr M."/>
            <person name="Alzaidan H."/>
            <person name="Almehaideb A."/>
            <person name="AlSasi O."/>
            <person name="Alhashem A."/>
            <person name="Hussaini H.A."/>
            <person name="Wali S."/>
            <person name="Alkuraya F.S."/>
        </authorList>
    </citation>
    <scope>INVOLVEMENT IN PFIC7</scope>
</reference>
<reference key="6">
    <citation type="journal article" date="2021" name="Genes (Basel)">
        <title>A Two-year clinical description of a patient with a rare type of low-GGT cholestasis caused by a novel variant of USP53.</title>
        <authorList>
            <person name="Shatokhina O."/>
            <person name="Semenova N."/>
            <person name="Demina N."/>
            <person name="Dadali E."/>
            <person name="Polyakov A."/>
            <person name="Ryzhkova O."/>
        </authorList>
    </citation>
    <scope>INVOLVEMENT IN PFIC7</scope>
</reference>
<reference key="7">
    <citation type="journal article" date="2021" name="J. Pediatr. Gastroenterol. Nutr.">
        <title>Progressive familial intrahepatic cholestasis associated with USP53 gene mutation in a Brazilian child.</title>
        <authorList>
            <person name="Porta G."/>
            <person name="Rigo P.S.M."/>
            <person name="Porta A."/>
            <person name="Pugliese R.P.S."/>
            <person name="Danesi V.L.B."/>
            <person name="Oliveira E."/>
            <person name="Borges C.C.V."/>
            <person name="Ribeiro C."/>
            <person name="Miura I.K."/>
        </authorList>
    </citation>
    <scope>INVOLVEMENT IN PFIC7</scope>
</reference>
<reference key="8">
    <citation type="journal article" date="2023" name="Yonsei Med. J.">
        <title>The first Korean adult case of progressive familial intrahepatic cholestasis type 7 with novel USP53 splicing variants by next generation sequencing.</title>
        <authorList>
            <person name="Ahn S."/>
            <person name="Choi J."/>
            <person name="Jeong S.H."/>
        </authorList>
    </citation>
    <scope>INVOLVEMENT IN PFIC7</scope>
</reference>
<reference key="9">
    <citation type="journal article" date="2024" name="Nat. Chem. Biol.">
        <title>Discovery and mechanism of K63-linkage-directed deubiquitinase activity in USP53.</title>
        <authorList>
            <person name="Wendrich K."/>
            <person name="Gallant K."/>
            <person name="Recknagel S."/>
            <person name="Petroulia S."/>
            <person name="Kazi N.H."/>
            <person name="Hane J.A."/>
            <person name="Fuehrer S."/>
            <person name="Bezstarosti K."/>
            <person name="O'Dea R."/>
            <person name="Demmers J."/>
            <person name="Gersch M."/>
        </authorList>
    </citation>
    <scope>FUNCTION</scope>
    <scope>CATALYTIC ACTIVITY</scope>
    <scope>MUTAGENESIS OF TYR-160</scope>
    <scope>CHARACTERIZATION OF VARIANTS PFIC7 SER-31; SER-99; TYR-132 AND TYR-303</scope>
</reference>
<reference key="10">
    <citation type="journal article" date="2020" name="Liver Int.">
        <title>Low-GGT intrahepatic cholestasis associated with biallelic USP53 variants: Clinical, histological and ultrastructural characterization.</title>
        <authorList>
            <person name="Zhang J."/>
            <person name="Yang Y."/>
            <person name="Gong J.Y."/>
            <person name="Li L.T."/>
            <person name="Li J.Q."/>
            <person name="Zhang M.H."/>
            <person name="Lu Y."/>
            <person name="Xie X.B."/>
            <person name="Hong Y.R."/>
            <person name="Yu Z."/>
            <person name="Knisely A.S."/>
            <person name="Wang J.S."/>
        </authorList>
    </citation>
    <scope>VARIANTS PFIC7 57-ARG--SER-1073 DEL; SER-99; ARG-132; VAL-293; 338-ARG--SER-1073 DEL; 476-ARG--SER-1073 DEL AND 520-ARG--SER-1073 DEL</scope>
    <scope>FUNCTION</scope>
    <scope>SUBCELLULAR LOCATION</scope>
</reference>
<reference key="11">
    <citation type="journal article" date="2020" name="NPJ Genom. Med.">
        <title>Genomic testing in 1019 individuals from 349 Pakistani families results in high diagnostic yield and clinical utility.</title>
        <authorList>
            <person name="Cheema H."/>
            <person name="Bertoli-Avella A.M."/>
            <person name="Skrahina V."/>
            <person name="Anjum M.N."/>
            <person name="Waheed N."/>
            <person name="Saeed A."/>
            <person name="Beetz C."/>
            <person name="Perez-Lopez J."/>
            <person name="Rocha M.E."/>
            <person name="Alawbathani S."/>
            <person name="Pereira C."/>
            <person name="Hovakimyan M."/>
            <person name="Patric I.R.P."/>
            <person name="Paknia O."/>
            <person name="Ameziane N."/>
            <person name="Cozma C."/>
            <person name="Bauer P."/>
            <person name="Rolfs A."/>
        </authorList>
    </citation>
    <scope>VARIANT PFIC7 57-ARG--SER-1073 DEL</scope>
</reference>
<reference key="12">
    <citation type="journal article" date="2021" name="J. Pediatr. Gastroenterol. Nutr.">
        <title>Cholestasis Due to USP53 Deficiency.</title>
        <authorList>
            <person name="Bull L.N."/>
            <person name="Ellmers R."/>
            <person name="Foskett P."/>
            <person name="Strautnieks S."/>
            <person name="Sambrotta M."/>
            <person name="Czubkowski P."/>
            <person name="Jankowska I."/>
            <person name="Wagner B."/>
            <person name="Deheragoda M."/>
            <person name="Thompson R.J."/>
        </authorList>
    </citation>
    <scope>VARIANT PFIC7 LEU-242</scope>
</reference>
<reference key="13">
    <citation type="journal article" date="2021" name="J. Hum. Genet.">
        <title>New paradigms of USP53 disease: normal GGT cholestasis, BRIC, cholangiopathy, and responsiveness to rifampicin.</title>
        <authorList>
            <person name="Alhebbi H."/>
            <person name="Peer-Zada A.A."/>
            <person name="Al-Hussaini A.A."/>
            <person name="Algubaisi S."/>
            <person name="Albassami A."/>
            <person name="AlMasri N."/>
            <person name="Alrusayni Y."/>
            <person name="Alruzug I.M."/>
            <person name="Alharby E."/>
            <person name="Samman M.A."/>
            <person name="Ayoub S.Z."/>
            <person name="Maddirevula S."/>
            <person name="Peake R.W.A."/>
            <person name="Alkuraya F.S."/>
            <person name="Wali S."/>
            <person name="Almontashiri N.A.M."/>
        </authorList>
    </citation>
    <scope>VARIANT PFIC7 582-ARG--SER-1073 DEL</scope>
</reference>
<reference key="14">
    <citation type="journal article" date="2023" name="Turk. J. Pediatr.">
        <title>A novel homozygous mutation in the USP53 gene as the cause of benign recurrent intrahepatic cholestasis in children: a case report.</title>
        <authorList>
            <person name="Ates B.B."/>
            <person name="Ceylan A.C."/>
            <person name="Hizal G."/>
            <person name="Duran F."/>
            <person name="Dogan H.T."/>
            <person name="Hizli S."/>
        </authorList>
    </citation>
    <scope>VARIANT PFIC7 520-ARG--SER-1073 DEL</scope>
</reference>
<reference key="15">
    <citation type="journal article" date="2024" name="Hepatol. Int.">
        <title>Diagnostic yield and novel candidate genes by next generation sequencing in 166 children with intrahepatic cholestasis.</title>
        <authorList>
            <person name="Zheng Y."/>
            <person name="Guo H."/>
            <person name="Chen L."/>
            <person name="Cheng W."/>
            <person name="Yan K."/>
            <person name="Zhang Z."/>
            <person name="Li M."/>
            <person name="Jin Y."/>
            <person name="Hu G."/>
            <person name="Wang C."/>
            <person name="Zhou C."/>
            <person name="Zhou W."/>
            <person name="Jia Z."/>
            <person name="Zheng B."/>
            <person name="Liu Z."/>
        </authorList>
    </citation>
    <scope>VARIANTS PFIC7 SER-31 AND TYR-132</scope>
</reference>
<reference key="16">
    <citation type="journal article" date="2024" name="J. Clin. Exp. Hepatol.">
        <title>Cholestatic liver disease due to novel USP53 mutations: a case series of three Indian children.</title>
        <authorList>
            <person name="Samanta A."/>
            <person name="Parveen N."/>
            <person name="Sen Sarma M."/>
            <person name="Poddar U."/>
            <person name="Srivastava A."/>
        </authorList>
    </citation>
    <scope>VARIANTS PFIC7 PHE-49; ARG-228; TYR-303 AND TYR-957</scope>
</reference>
<reference key="17">
    <citation type="journal article" date="2024" name="J. Pediatr. Gastroenterol. Nutr.">
        <title>Natural course and outcomes of children with ubiquitin-specific protease 53 (USP53)-related genetic chronic cholestasis.</title>
        <authorList>
            <consortium name="Indian PFIC Registry"/>
            <person name="Alam S."/>
            <person name="Lal B.B."/>
            <person name="Ravindranath A."/>
            <person name="Bavdekar A."/>
            <person name="Dheivamani N."/>
            <person name="Snehavardhan P."/>
            <person name="Shah A."/>
            <person name="Tripathi P.R."/>
            <person name="Nagral A."/>
            <person name="Srikanth K.P."/>
            <person name="Shah I."/>
            <person name="Ramakrishna S.H."/>
            <person name="Suchismita A."/>
            <person name="Waikar Y."/>
            <person name="Shah V."/>
            <person name="Nalwalla Z."/>
            <person name="Kumar K."/>
            <person name="Maria A."/>
            <person name="Sibal A."/>
            <person name="Sivaramakrishnan V.M."/>
            <person name="Wadhwa N."/>
            <person name="Ashritha A."/>
            <person name="Sood V."/>
            <person name="Khanna R."/>
        </authorList>
    </citation>
    <scope>VARIANTS PFIC7 ASP-31; SER-41; ALA-94; 111-ARG--SER-1073 DEL; ARG-154; GLY-161; 172-SER--SER-1073 DEL; ASP-353; 381-GLU--SER-1073 DEL; 520-ARG--SER-1073 DEL; 530-GLN--SER-1073 DEL; VAL-532; ARG-647; ALA-908 AND THR-1014</scope>
</reference>
<sequence length="1073" mass="120806">MAWVKFLRKPGGNLGKVYQPGSMLSLAPTKGLLNEPGQNSCFLNSAVQVLWQLDIFRRSLRVLTGHVCQGDACIFCALKTIFAQFQHSREKALPSDNIRHALAESFKDEQRFQLGLMDDAAECFENMLERIHFHIVPSRDADMCTSKSCITHQKFAMTLYEQCVCRSCGASSDPLPFTEFVRYISTTALCNEVERMLERHERFKPEMFAELLQAANTTDDYRKCPSNCGQKIKIRRVLMNCPEIVTIGLVWDSEHSDLTEAVVRNLATHLYLPGLFYRVTDENAKNSELNLVGMICYTSQHYCAFAFHTKSSKWVFFDDANVKEIGTRWKDVVSKCIRCHFQPLLLFYANPDGTAVSTEDALRQVISWSHYKSVAENMGCEKPVIHKSDNLKENGFGDQAKQRENQKFPTDNISSSNRSHSHTGVGKGPAKLSHIDQREKIKDISRECALKAIEQKNLLSSQRKDLEKGQRKDLGRHRDLVDEDLSHFQSGSPPAPNGFKQHGNPHLYHSQGKGSYKHDRVVPQSRASAQIISSSKSQILAPGEKITGKVKSDNGTGYDTDSSQDSRDRGNSCDSSSKSRNRGWKPMRETLNVDSIFSESEKRQHSPRHKPNISNKPKSSKDPSFSNWPKENPKQKGLMTIYEDEMKQEIGSRSSLESNGKGAEKNKGLVEGKVHGDNWQMQRTESGYESSDHISNGSTNLDSPVIDGNGTVMDISGVKETVCFSDQITTSNLNKERGDCTSLQSQHHLEGFRKELRNLEAGYKSHEFHPESHLQIKNHLIKRSHVHEDNGKLFPSSSLQIPKDHNAREHIHQSDEQKLEKPNECKFSEWLNIENSERTGLPFHVDNSASGKRVNSNEPSSLWSSHLRTVGLKPETAPLIQQQNIMDQCYFENSLSTECIIRSASRSDGCQMPKLFCQNLPPPLPPKKYAITSVPQSEKSESTPDVKLTEVFKATSHLPKHSLSTASEPSLEVSTHMNDERHKETFQVRECFGNTPNCPSSSSTNDFQANSGAIDAFCQPELDSISTCPNETVSLTTYFSVDSCMTDTYRLKYHQRPKLSFPESSGFCNNSLS</sequence>
<dbReference type="EC" id="3.4.19.12" evidence="19"/>
<dbReference type="EMBL" id="AJ583824">
    <property type="protein sequence ID" value="CAE47751.1"/>
    <property type="molecule type" value="mRNA"/>
</dbReference>
<dbReference type="EMBL" id="CR749490">
    <property type="protein sequence ID" value="CAH18315.1"/>
    <property type="molecule type" value="mRNA"/>
</dbReference>
<dbReference type="EMBL" id="AB037771">
    <property type="protein sequence ID" value="BAA92588.1"/>
    <property type="molecule type" value="mRNA"/>
</dbReference>
<dbReference type="EMBL" id="BC017382">
    <property type="protein sequence ID" value="AAH17382.1"/>
    <property type="status" value="ALT_INIT"/>
    <property type="molecule type" value="mRNA"/>
</dbReference>
<dbReference type="CCDS" id="CCDS43265.1"/>
<dbReference type="RefSeq" id="NP_001358324.1">
    <property type="nucleotide sequence ID" value="NM_001371395.1"/>
</dbReference>
<dbReference type="RefSeq" id="NP_001358328.1">
    <property type="nucleotide sequence ID" value="NM_001371399.1"/>
</dbReference>
<dbReference type="RefSeq" id="NP_001376587.1">
    <property type="nucleotide sequence ID" value="NM_001389658.1"/>
</dbReference>
<dbReference type="RefSeq" id="NP_001376588.1">
    <property type="nucleotide sequence ID" value="NM_001389659.1"/>
</dbReference>
<dbReference type="RefSeq" id="NP_061923.2">
    <property type="nucleotide sequence ID" value="NM_019050.3"/>
</dbReference>
<dbReference type="RefSeq" id="XP_005263130.1">
    <property type="nucleotide sequence ID" value="XM_005263073.3"/>
</dbReference>
<dbReference type="RefSeq" id="XP_011530339.1">
    <property type="nucleotide sequence ID" value="XM_011532037.3"/>
</dbReference>
<dbReference type="RefSeq" id="XP_016863801.1">
    <property type="nucleotide sequence ID" value="XM_017008312.1"/>
</dbReference>
<dbReference type="RefSeq" id="XP_016863802.1">
    <property type="nucleotide sequence ID" value="XM_017008313.2"/>
</dbReference>
<dbReference type="RefSeq" id="XP_016863803.1">
    <property type="nucleotide sequence ID" value="XM_017008314.2"/>
</dbReference>
<dbReference type="RefSeq" id="XP_016863804.1">
    <property type="nucleotide sequence ID" value="XM_017008315.1"/>
</dbReference>
<dbReference type="RefSeq" id="XP_047271782.1">
    <property type="nucleotide sequence ID" value="XM_047415826.1"/>
</dbReference>
<dbReference type="RefSeq" id="XP_047271783.1">
    <property type="nucleotide sequence ID" value="XM_047415827.1"/>
</dbReference>
<dbReference type="RefSeq" id="XP_047271784.1">
    <property type="nucleotide sequence ID" value="XM_047415828.1"/>
</dbReference>
<dbReference type="RefSeq" id="XP_047271785.1">
    <property type="nucleotide sequence ID" value="XM_047415829.1"/>
</dbReference>
<dbReference type="RefSeq" id="XP_054206225.1">
    <property type="nucleotide sequence ID" value="XM_054350250.1"/>
</dbReference>
<dbReference type="RefSeq" id="XP_054206226.1">
    <property type="nucleotide sequence ID" value="XM_054350251.1"/>
</dbReference>
<dbReference type="RefSeq" id="XP_054206227.1">
    <property type="nucleotide sequence ID" value="XM_054350252.1"/>
</dbReference>
<dbReference type="RefSeq" id="XP_054206228.1">
    <property type="nucleotide sequence ID" value="XM_054350253.1"/>
</dbReference>
<dbReference type="RefSeq" id="XP_054206229.1">
    <property type="nucleotide sequence ID" value="XM_054350254.1"/>
</dbReference>
<dbReference type="RefSeq" id="XP_054206230.1">
    <property type="nucleotide sequence ID" value="XM_054350255.1"/>
</dbReference>
<dbReference type="RefSeq" id="XP_054206231.1">
    <property type="nucleotide sequence ID" value="XM_054350256.1"/>
</dbReference>
<dbReference type="SMR" id="Q70EK8"/>
<dbReference type="BioGRID" id="120020">
    <property type="interactions" value="140"/>
</dbReference>
<dbReference type="FunCoup" id="Q70EK8">
    <property type="interactions" value="80"/>
</dbReference>
<dbReference type="IntAct" id="Q70EK8">
    <property type="interactions" value="31"/>
</dbReference>
<dbReference type="STRING" id="9606.ENSP00000409906"/>
<dbReference type="MEROPS" id="C19.081"/>
<dbReference type="GlyGen" id="Q70EK8">
    <property type="glycosylation" value="1 site, 1 O-linked glycan (1 site)"/>
</dbReference>
<dbReference type="iPTMnet" id="Q70EK8"/>
<dbReference type="PhosphoSitePlus" id="Q70EK8"/>
<dbReference type="BioMuta" id="USP53"/>
<dbReference type="DMDM" id="88943889"/>
<dbReference type="jPOST" id="Q70EK8"/>
<dbReference type="MassIVE" id="Q70EK8"/>
<dbReference type="PaxDb" id="9606-ENSP00000409906"/>
<dbReference type="PeptideAtlas" id="Q70EK8"/>
<dbReference type="ProteomicsDB" id="68536"/>
<dbReference type="Antibodypedia" id="26664">
    <property type="antibodies" value="113 antibodies from 23 providers"/>
</dbReference>
<dbReference type="DNASU" id="54532"/>
<dbReference type="Ensembl" id="ENST00000450251.6">
    <property type="protein sequence ID" value="ENSP00000409906.1"/>
    <property type="gene ID" value="ENSG00000145390.12"/>
</dbReference>
<dbReference type="Ensembl" id="ENST00000692078.1">
    <property type="protein sequence ID" value="ENSP00000509606.1"/>
    <property type="gene ID" value="ENSG00000145390.12"/>
</dbReference>
<dbReference type="GeneID" id="54532"/>
<dbReference type="KEGG" id="hsa:54532"/>
<dbReference type="MANE-Select" id="ENST00000692078.1">
    <property type="protein sequence ID" value="ENSP00000509606.1"/>
    <property type="RefSeq nucleotide sequence ID" value="NM_001371395.1"/>
    <property type="RefSeq protein sequence ID" value="NP_001358324.1"/>
</dbReference>
<dbReference type="UCSC" id="uc003icr.5">
    <property type="organism name" value="human"/>
</dbReference>
<dbReference type="AGR" id="HGNC:29255"/>
<dbReference type="CTD" id="54532"/>
<dbReference type="DisGeNET" id="54532"/>
<dbReference type="GeneCards" id="USP53"/>
<dbReference type="HGNC" id="HGNC:29255">
    <property type="gene designation" value="USP53"/>
</dbReference>
<dbReference type="HPA" id="ENSG00000145390">
    <property type="expression patterns" value="Low tissue specificity"/>
</dbReference>
<dbReference type="MalaCards" id="USP53"/>
<dbReference type="MIM" id="617431">
    <property type="type" value="gene"/>
</dbReference>
<dbReference type="MIM" id="619658">
    <property type="type" value="phenotype"/>
</dbReference>
<dbReference type="neXtProt" id="NX_Q70EK8"/>
<dbReference type="OpenTargets" id="ENSG00000145390"/>
<dbReference type="PharmGKB" id="PA134940368"/>
<dbReference type="VEuPathDB" id="HostDB:ENSG00000145390"/>
<dbReference type="eggNOG" id="KOG1887">
    <property type="taxonomic scope" value="Eukaryota"/>
</dbReference>
<dbReference type="GeneTree" id="ENSGT00940000156337"/>
<dbReference type="HOGENOM" id="CLU_287278_0_0_1"/>
<dbReference type="InParanoid" id="Q70EK8"/>
<dbReference type="OMA" id="MEQCYSE"/>
<dbReference type="OrthoDB" id="205782at2759"/>
<dbReference type="PAN-GO" id="Q70EK8">
    <property type="GO annotations" value="3 GO annotations based on evolutionary models"/>
</dbReference>
<dbReference type="PhylomeDB" id="Q70EK8"/>
<dbReference type="TreeFam" id="TF323194"/>
<dbReference type="PathwayCommons" id="Q70EK8"/>
<dbReference type="SignaLink" id="Q70EK8"/>
<dbReference type="BioGRID-ORCS" id="54532">
    <property type="hits" value="17 hits in 1152 CRISPR screens"/>
</dbReference>
<dbReference type="ChiTaRS" id="USP53">
    <property type="organism name" value="human"/>
</dbReference>
<dbReference type="GeneWiki" id="USP53"/>
<dbReference type="GenomeRNAi" id="54532"/>
<dbReference type="Pharos" id="Q70EK8">
    <property type="development level" value="Tbio"/>
</dbReference>
<dbReference type="PRO" id="PR:Q70EK8"/>
<dbReference type="Proteomes" id="UP000005640">
    <property type="component" value="Chromosome 4"/>
</dbReference>
<dbReference type="RNAct" id="Q70EK8">
    <property type="molecule type" value="protein"/>
</dbReference>
<dbReference type="Bgee" id="ENSG00000145390">
    <property type="expression patterns" value="Expressed in calcaneal tendon and 184 other cell types or tissues"/>
</dbReference>
<dbReference type="ExpressionAtlas" id="Q70EK8">
    <property type="expression patterns" value="baseline and differential"/>
</dbReference>
<dbReference type="GO" id="GO:0005923">
    <property type="term" value="C:bicellular tight junction"/>
    <property type="evidence" value="ECO:0000315"/>
    <property type="project" value="UniProtKB"/>
</dbReference>
<dbReference type="GO" id="GO:0005911">
    <property type="term" value="C:cell-cell junction"/>
    <property type="evidence" value="ECO:0000318"/>
    <property type="project" value="GO_Central"/>
</dbReference>
<dbReference type="GO" id="GO:0061578">
    <property type="term" value="F:K63-linked deubiquitinase activity"/>
    <property type="evidence" value="ECO:0000314"/>
    <property type="project" value="UniProtKB"/>
</dbReference>
<dbReference type="GO" id="GO:0001508">
    <property type="term" value="P:action potential"/>
    <property type="evidence" value="ECO:0007669"/>
    <property type="project" value="Ensembl"/>
</dbReference>
<dbReference type="GO" id="GO:1904019">
    <property type="term" value="P:epithelial cell apoptotic process"/>
    <property type="evidence" value="ECO:0007669"/>
    <property type="project" value="Ensembl"/>
</dbReference>
<dbReference type="GO" id="GO:1905584">
    <property type="term" value="P:outer hair cell apoptotic process"/>
    <property type="evidence" value="ECO:0007669"/>
    <property type="project" value="Ensembl"/>
</dbReference>
<dbReference type="GO" id="GO:0016579">
    <property type="term" value="P:protein deubiquitination"/>
    <property type="evidence" value="ECO:0007669"/>
    <property type="project" value="InterPro"/>
</dbReference>
<dbReference type="GO" id="GO:0010996">
    <property type="term" value="P:response to auditory stimulus"/>
    <property type="evidence" value="ECO:0000318"/>
    <property type="project" value="GO_Central"/>
</dbReference>
<dbReference type="GO" id="GO:0007605">
    <property type="term" value="P:sensory perception of sound"/>
    <property type="evidence" value="ECO:0000318"/>
    <property type="project" value="GO_Central"/>
</dbReference>
<dbReference type="CDD" id="cd02257">
    <property type="entry name" value="Peptidase_C19"/>
    <property type="match status" value="1"/>
</dbReference>
<dbReference type="FunFam" id="3.90.70.10:FF:000041">
    <property type="entry name" value="Inactive ubiquitin carboxyl-terminal hydrolase 53"/>
    <property type="match status" value="1"/>
</dbReference>
<dbReference type="Gene3D" id="3.90.70.10">
    <property type="entry name" value="Cysteine proteinases"/>
    <property type="match status" value="1"/>
</dbReference>
<dbReference type="InterPro" id="IPR052398">
    <property type="entry name" value="Inactive_ubiquitin_hydrolase"/>
</dbReference>
<dbReference type="InterPro" id="IPR038765">
    <property type="entry name" value="Papain-like_cys_pep_sf"/>
</dbReference>
<dbReference type="InterPro" id="IPR001394">
    <property type="entry name" value="Peptidase_C19_UCH"/>
</dbReference>
<dbReference type="InterPro" id="IPR028889">
    <property type="entry name" value="USP_dom"/>
</dbReference>
<dbReference type="PANTHER" id="PTHR22975:SF6">
    <property type="entry name" value="INACTIVE UBIQUITIN CARBOXYL-TERMINAL HYDROLASE 53"/>
    <property type="match status" value="1"/>
</dbReference>
<dbReference type="PANTHER" id="PTHR22975">
    <property type="entry name" value="UBIQUITIN SPECIFIC PROTEINASE"/>
    <property type="match status" value="1"/>
</dbReference>
<dbReference type="Pfam" id="PF00443">
    <property type="entry name" value="UCH"/>
    <property type="match status" value="1"/>
</dbReference>
<dbReference type="SUPFAM" id="SSF54001">
    <property type="entry name" value="Cysteine proteinases"/>
    <property type="match status" value="1"/>
</dbReference>
<dbReference type="PROSITE" id="PS50235">
    <property type="entry name" value="USP_3"/>
    <property type="match status" value="1"/>
</dbReference>
<feature type="chain" id="PRO_0000080681" description="Ubiquitin carboxyl-terminal hydrolase 53">
    <location>
        <begin position="1"/>
        <end position="1073"/>
    </location>
</feature>
<feature type="domain" description="USP">
    <location>
        <begin position="30"/>
        <end position="351"/>
    </location>
</feature>
<feature type="region of interest" description="Disordered" evidence="4">
    <location>
        <begin position="391"/>
        <end position="437"/>
    </location>
</feature>
<feature type="region of interest" description="Disordered" evidence="4">
    <location>
        <begin position="485"/>
        <end position="636"/>
    </location>
</feature>
<feature type="compositionally biased region" description="Polar residues" evidence="4">
    <location>
        <begin position="407"/>
        <end position="418"/>
    </location>
</feature>
<feature type="compositionally biased region" description="Low complexity" evidence="4">
    <location>
        <begin position="524"/>
        <end position="541"/>
    </location>
</feature>
<feature type="compositionally biased region" description="Polar residues" evidence="4">
    <location>
        <begin position="553"/>
        <end position="563"/>
    </location>
</feature>
<feature type="compositionally biased region" description="Low complexity" evidence="4">
    <location>
        <begin position="612"/>
        <end position="627"/>
    </location>
</feature>
<feature type="active site" description="Nucleophile" evidence="3">
    <location>
        <position position="41"/>
    </location>
</feature>
<feature type="active site" description="Proton acceptor" evidence="3">
    <location>
        <position position="301"/>
    </location>
</feature>
<feature type="binding site" evidence="2">
    <location>
        <position position="66"/>
    </location>
    <ligand>
        <name>Zn(2+)</name>
        <dbReference type="ChEBI" id="CHEBI:29105"/>
        <label>1</label>
    </ligand>
</feature>
<feature type="binding site" evidence="2">
    <location>
        <position position="68"/>
    </location>
    <ligand>
        <name>Zn(2+)</name>
        <dbReference type="ChEBI" id="CHEBI:29105"/>
        <label>1</label>
    </ligand>
</feature>
<feature type="binding site" evidence="2">
    <location>
        <position position="73"/>
    </location>
    <ligand>
        <name>Zn(2+)</name>
        <dbReference type="ChEBI" id="CHEBI:29105"/>
        <label>1</label>
    </ligand>
</feature>
<feature type="binding site" evidence="2">
    <location>
        <position position="76"/>
    </location>
    <ligand>
        <name>Zn(2+)</name>
        <dbReference type="ChEBI" id="CHEBI:29105"/>
        <label>1</label>
    </ligand>
</feature>
<feature type="binding site" evidence="2">
    <location>
        <position position="132"/>
    </location>
    <ligand>
        <name>Zn(2+)</name>
        <dbReference type="ChEBI" id="CHEBI:29105"/>
        <label>2</label>
    </ligand>
</feature>
<feature type="binding site" evidence="2">
    <location>
        <position position="144"/>
    </location>
    <ligand>
        <name>Zn(2+)</name>
        <dbReference type="ChEBI" id="CHEBI:29105"/>
        <label>2</label>
    </ligand>
</feature>
<feature type="binding site" evidence="2">
    <location>
        <position position="149"/>
    </location>
    <ligand>
        <name>Zn(2+)</name>
        <dbReference type="ChEBI" id="CHEBI:29105"/>
        <label>2</label>
    </ligand>
</feature>
<feature type="binding site" evidence="2">
    <location>
        <position position="152"/>
    </location>
    <ligand>
        <name>Zn(2+)</name>
        <dbReference type="ChEBI" id="CHEBI:29105"/>
        <label>2</label>
    </ligand>
</feature>
<feature type="binding site" evidence="2">
    <location>
        <position position="165"/>
    </location>
    <ligand>
        <name>Zn(2+)</name>
        <dbReference type="ChEBI" id="CHEBI:29105"/>
        <label>3</label>
    </ligand>
</feature>
<feature type="binding site" evidence="2">
    <location>
        <position position="168"/>
    </location>
    <ligand>
        <name>Zn(2+)</name>
        <dbReference type="ChEBI" id="CHEBI:29105"/>
        <label>3</label>
    </ligand>
</feature>
<feature type="binding site" evidence="2">
    <location>
        <position position="224"/>
    </location>
    <ligand>
        <name>Zn(2+)</name>
        <dbReference type="ChEBI" id="CHEBI:29105"/>
        <label>3</label>
    </ligand>
</feature>
<feature type="binding site" evidence="2">
    <location>
        <position position="228"/>
    </location>
    <ligand>
        <name>Zn(2+)</name>
        <dbReference type="ChEBI" id="CHEBI:29105"/>
        <label>3</label>
    </ligand>
</feature>
<feature type="sequence variant" id="VAR_090177" description="In PFIC7; uncertain significance." evidence="18">
    <original>G</original>
    <variation>D</variation>
    <location>
        <position position="31"/>
    </location>
</feature>
<feature type="sequence variant" id="VAR_090178" description="In PFIC7; likely pathogenic; strongly decreased ability to catalyze deubiquitination." evidence="14 19">
    <original>G</original>
    <variation>S</variation>
    <location>
        <position position="31"/>
    </location>
</feature>
<feature type="sequence variant" id="VAR_090179" description="In PFIC7; uncertain significance." evidence="18">
    <original>C</original>
    <variation>S</variation>
    <location>
        <position position="41"/>
    </location>
</feature>
<feature type="sequence variant" id="VAR_090180" description="In PFIC7; uncertain significance." evidence="17">
    <original>V</original>
    <variation>F</variation>
    <location>
        <position position="49"/>
    </location>
</feature>
<feature type="sequence variant" id="VAR_086693" description="In PFIC7." evidence="8 11">
    <location>
        <begin position="57"/>
        <end position="1073"/>
    </location>
</feature>
<feature type="sequence variant" id="VAR_090181" description="In PFIC7; uncertain significance." evidence="18">
    <original>P</original>
    <variation>A</variation>
    <location>
        <position position="94"/>
    </location>
</feature>
<feature type="sequence variant" id="VAR_086694" description="In PFIC7; likely pathogenic; abolished ability to deubiquitinate 'Lys-63'-linked polyubiquitin chains." evidence="8 19">
    <original>R</original>
    <variation>S</variation>
    <location>
        <position position="99"/>
    </location>
</feature>
<feature type="sequence variant" id="VAR_090182" description="In PFIC7." evidence="18">
    <location>
        <begin position="111"/>
        <end position="1073"/>
    </location>
</feature>
<feature type="sequence variant" id="VAR_086695" description="In PFIC7; likely pathogenic." evidence="8">
    <original>H</original>
    <variation>R</variation>
    <location>
        <position position="132"/>
    </location>
</feature>
<feature type="sequence variant" id="VAR_090183" description="In PFIC7; likely pathogenic; strongly decreased ability to catalyze deubiquitination." evidence="14 19">
    <original>H</original>
    <variation>Y</variation>
    <location>
        <position position="132"/>
    </location>
</feature>
<feature type="sequence variant" id="VAR_090184" description="In PFIC7; uncertain significance." evidence="18">
    <original>K</original>
    <variation>R</variation>
    <location>
        <position position="154"/>
    </location>
</feature>
<feature type="sequence variant" id="VAR_090185" description="In PFIC7; uncertain significance." evidence="18">
    <original>E</original>
    <variation>G</variation>
    <location>
        <position position="161"/>
    </location>
</feature>
<feature type="sequence variant" id="VAR_090186" description="In PFIC7." evidence="18">
    <location>
        <begin position="172"/>
        <end position="1073"/>
    </location>
</feature>
<feature type="sequence variant" id="VAR_090187" description="In PFIC7; uncertain significance." evidence="17">
    <original>C</original>
    <variation>R</variation>
    <location>
        <position position="228"/>
    </location>
</feature>
<feature type="sequence variant" id="VAR_086696" description="In PFIC7; uncertain significance." evidence="10">
    <original>P</original>
    <variation>L</variation>
    <location>
        <position position="242"/>
    </location>
</feature>
<feature type="sequence variant" id="VAR_086697" description="In PFIC7." evidence="8">
    <original>G</original>
    <variation>V</variation>
    <location>
        <position position="293"/>
    </location>
</feature>
<feature type="sequence variant" id="VAR_090188" description="In PFIC7; uncertain significance; decreased ability to deubiquitinate 'Lys-63'-linked polyubiquitin chains." evidence="17 19">
    <original>C</original>
    <variation>Y</variation>
    <location>
        <position position="303"/>
    </location>
</feature>
<feature type="sequence variant" id="VAR_086698" description="In PFIC7." evidence="8">
    <location>
        <begin position="338"/>
        <end position="1073"/>
    </location>
</feature>
<feature type="sequence variant" id="VAR_090189" description="In PFIC7; uncertain significance." evidence="18">
    <original>G</original>
    <variation>D</variation>
    <location>
        <position position="353"/>
    </location>
</feature>
<feature type="sequence variant" id="VAR_090190" description="In PFIC7." evidence="18">
    <location>
        <begin position="381"/>
        <end position="1073"/>
    </location>
</feature>
<feature type="sequence variant" id="VAR_086699" description="In PFIC7." evidence="8">
    <location>
        <begin position="476"/>
        <end position="1073"/>
    </location>
</feature>
<feature type="sequence variant" id="VAR_086700" description="In PFIC7." evidence="8 16 18">
    <location>
        <begin position="520"/>
        <end position="1073"/>
    </location>
</feature>
<feature type="sequence variant" id="VAR_090191" description="In PFIC7." evidence="18">
    <location>
        <begin position="530"/>
        <end position="1073"/>
    </location>
</feature>
<feature type="sequence variant" id="VAR_090192" description="In PFIC7." evidence="18">
    <original>I</original>
    <variation>V</variation>
    <location>
        <position position="532"/>
    </location>
</feature>
<feature type="sequence variant" id="VAR_090193" description="In PFIC7." evidence="9">
    <location>
        <begin position="582"/>
        <end position="1073"/>
    </location>
</feature>
<feature type="sequence variant" id="VAR_090194" description="In PFIC7; uncertain significance." evidence="18">
    <original>K</original>
    <variation>R</variation>
    <location>
        <position position="647"/>
    </location>
</feature>
<feature type="sequence variant" id="VAR_090195" description="In PFIC7; uncertain significance." evidence="18">
    <original>D</original>
    <variation>A</variation>
    <location>
        <position position="908"/>
    </location>
</feature>
<feature type="sequence variant" id="VAR_090196" description="In PFIC7; uncertain significance." evidence="17">
    <original>H</original>
    <variation>Y</variation>
    <location>
        <position position="957"/>
    </location>
</feature>
<feature type="sequence variant" id="VAR_051541" description="In dbSNP:rs3749591." evidence="5">
    <original>S</original>
    <variation>R</variation>
    <location>
        <position position="962"/>
    </location>
</feature>
<feature type="sequence variant" id="VAR_090197" description="In PFIC7; uncertain significance." evidence="18">
    <original>I</original>
    <variation>T</variation>
    <location>
        <position position="1014"/>
    </location>
</feature>
<feature type="mutagenesis site" description="Reduced ability to mediate cleavage of tri- and tetra-ubiquitin chains." evidence="19">
    <original>Y</original>
    <variation>K</variation>
    <location>
        <position position="160"/>
    </location>
</feature>
<feature type="sequence conflict" description="In Ref. 1; CAE47751." evidence="22" ref="1">
    <location>
        <position position="190"/>
    </location>
</feature>
<feature type="sequence conflict" description="In Ref. 2; CAH18315." evidence="22" ref="2">
    <original>A</original>
    <variation>V</variation>
    <location>
        <position position="209"/>
    </location>
</feature>
<feature type="sequence conflict" description="In Ref. 2; CAH18315." evidence="22" ref="2">
    <original>F</original>
    <variation>FF</variation>
    <location>
        <position position="276"/>
    </location>
</feature>
<feature type="sequence conflict" description="In Ref. 2; CAH18315." evidence="22" ref="2">
    <original>P</original>
    <variation>A</variation>
    <location>
        <position position="611"/>
    </location>
</feature>
<feature type="sequence conflict" description="In Ref. 4; AAH17382." evidence="22" ref="4">
    <original>T</original>
    <variation>G</variation>
    <location>
        <position position="869"/>
    </location>
</feature>
<gene>
    <name evidence="21 26" type="primary">USP53</name>
    <name evidence="20" type="synonym">KIAA1350</name>
</gene>
<organism>
    <name type="scientific">Homo sapiens</name>
    <name type="common">Human</name>
    <dbReference type="NCBI Taxonomy" id="9606"/>
    <lineage>
        <taxon>Eukaryota</taxon>
        <taxon>Metazoa</taxon>
        <taxon>Chordata</taxon>
        <taxon>Craniata</taxon>
        <taxon>Vertebrata</taxon>
        <taxon>Euteleostomi</taxon>
        <taxon>Mammalia</taxon>
        <taxon>Eutheria</taxon>
        <taxon>Euarchontoglires</taxon>
        <taxon>Primates</taxon>
        <taxon>Haplorrhini</taxon>
        <taxon>Catarrhini</taxon>
        <taxon>Hominidae</taxon>
        <taxon>Homo</taxon>
    </lineage>
</organism>
<keyword id="KW-0965">Cell junction</keyword>
<keyword id="KW-0209">Deafness</keyword>
<keyword id="KW-0225">Disease variant</keyword>
<keyword id="KW-0378">Hydrolase</keyword>
<keyword id="KW-0988">Intrahepatic cholestasis</keyword>
<keyword id="KW-0479">Metal-binding</keyword>
<keyword id="KW-1267">Proteomics identification</keyword>
<keyword id="KW-1185">Reference proteome</keyword>
<keyword id="KW-0796">Tight junction</keyword>
<keyword id="KW-0833">Ubl conjugation pathway</keyword>
<keyword id="KW-0862">Zinc</keyword>
<accession>Q70EK8</accession>
<accession>Q68DA5</accession>
<accession>Q8WVQ5</accession>
<accession>Q9P2J7</accession>
<evidence type="ECO:0000250" key="1">
    <source>
        <dbReference type="UniProtKB" id="P15975"/>
    </source>
</evidence>
<evidence type="ECO:0000250" key="2">
    <source>
        <dbReference type="UniProtKB" id="Q70EL1"/>
    </source>
</evidence>
<evidence type="ECO:0000255" key="3">
    <source>
        <dbReference type="PROSITE-ProRule" id="PRU01035"/>
    </source>
</evidence>
<evidence type="ECO:0000256" key="4">
    <source>
        <dbReference type="SAM" id="MobiDB-lite"/>
    </source>
</evidence>
<evidence type="ECO:0000269" key="5">
    <source>
    </source>
</evidence>
<evidence type="ECO:0000269" key="6">
    <source>
    </source>
</evidence>
<evidence type="ECO:0000269" key="7">
    <source>
    </source>
</evidence>
<evidence type="ECO:0000269" key="8">
    <source>
    </source>
</evidence>
<evidence type="ECO:0000269" key="9">
    <source>
    </source>
</evidence>
<evidence type="ECO:0000269" key="10">
    <source>
    </source>
</evidence>
<evidence type="ECO:0000269" key="11">
    <source>
    </source>
</evidence>
<evidence type="ECO:0000269" key="12">
    <source>
    </source>
</evidence>
<evidence type="ECO:0000269" key="13">
    <source>
    </source>
</evidence>
<evidence type="ECO:0000269" key="14">
    <source>
    </source>
</evidence>
<evidence type="ECO:0000269" key="15">
    <source>
    </source>
</evidence>
<evidence type="ECO:0000269" key="16">
    <source>
    </source>
</evidence>
<evidence type="ECO:0000269" key="17">
    <source>
    </source>
</evidence>
<evidence type="ECO:0000269" key="18">
    <source>
    </source>
</evidence>
<evidence type="ECO:0000269" key="19">
    <source>
    </source>
</evidence>
<evidence type="ECO:0000303" key="20">
    <source>
    </source>
</evidence>
<evidence type="ECO:0000303" key="21">
    <source>
    </source>
</evidence>
<evidence type="ECO:0000305" key="22"/>
<evidence type="ECO:0000312" key="23">
    <source>
        <dbReference type="EMBL" id="AAH17382.1"/>
    </source>
</evidence>
<evidence type="ECO:0000312" key="24">
    <source>
        <dbReference type="EMBL" id="BAA92588.1"/>
    </source>
</evidence>
<evidence type="ECO:0000312" key="25">
    <source>
        <dbReference type="EMBL" id="CAE47751.1"/>
    </source>
</evidence>
<evidence type="ECO:0000312" key="26">
    <source>
        <dbReference type="HGNC" id="HGNC:29255"/>
    </source>
</evidence>
<proteinExistence type="evidence at protein level"/>
<name>UBP53_HUMAN</name>